<feature type="chain" id="PRO_0000429130" description="Glutaredoxin arsenate reductase">
    <location>
        <begin position="1"/>
        <end position="131"/>
    </location>
</feature>
<feature type="active site" description="Nucleophile" evidence="1">
    <location>
        <position position="8"/>
    </location>
</feature>
<feature type="active site" description="Nucleophile" evidence="1">
    <location>
        <position position="80"/>
    </location>
</feature>
<feature type="disulfide bond" description="Redox-active; alternate" evidence="4">
    <location>
        <begin position="8"/>
        <end position="80"/>
    </location>
</feature>
<feature type="disulfide bond" description="Redox-active; alternate" evidence="4">
    <location>
        <begin position="80"/>
        <end position="82"/>
    </location>
</feature>
<feature type="mutagenesis site" description="Abolishes arsenate reductase activity." evidence="2 5">
    <original>C</original>
    <variation>S</variation>
    <location>
        <position position="8"/>
    </location>
</feature>
<feature type="mutagenesis site" description="Little or no effect on arsenate reductase activity. Abolishes protein phosphatase activity." evidence="2 5">
    <original>C</original>
    <variation>S</variation>
    <location>
        <position position="13"/>
    </location>
</feature>
<feature type="mutagenesis site" description="Little or no effect on arsenate reductase activity." evidence="5">
    <original>C</original>
    <variation>A</variation>
    <location>
        <position position="35"/>
    </location>
</feature>
<feature type="mutagenesis site" description="Abolishes arsenate reductase activity." evidence="2 5">
    <original>C</original>
    <variation>S</variation>
    <location>
        <position position="80"/>
    </location>
</feature>
<feature type="mutagenesis site" description="Abolishes arsenate reductase activity." evidence="2 5">
    <original>C</original>
    <variation>S</variation>
    <location>
        <position position="82"/>
    </location>
</feature>
<feature type="strand" evidence="8">
    <location>
        <begin position="2"/>
        <end position="7"/>
    </location>
</feature>
<feature type="helix" evidence="8">
    <location>
        <begin position="13"/>
        <end position="25"/>
    </location>
</feature>
<feature type="turn" evidence="9">
    <location>
        <begin position="26"/>
        <end position="29"/>
    </location>
</feature>
<feature type="strand" evidence="8">
    <location>
        <begin position="30"/>
        <end position="35"/>
    </location>
</feature>
<feature type="strand" evidence="11">
    <location>
        <begin position="36"/>
        <end position="39"/>
    </location>
</feature>
<feature type="helix" evidence="8">
    <location>
        <begin position="44"/>
        <end position="51"/>
    </location>
</feature>
<feature type="turn" evidence="8">
    <location>
        <begin position="52"/>
        <end position="54"/>
    </location>
</feature>
<feature type="helix" evidence="9">
    <location>
        <begin position="58"/>
        <end position="60"/>
    </location>
</feature>
<feature type="helix" evidence="8">
    <location>
        <begin position="65"/>
        <end position="67"/>
    </location>
</feature>
<feature type="helix" evidence="8">
    <location>
        <begin position="70"/>
        <end position="72"/>
    </location>
</feature>
<feature type="strand" evidence="8">
    <location>
        <begin position="74"/>
        <end position="78"/>
    </location>
</feature>
<feature type="strand" evidence="10">
    <location>
        <begin position="80"/>
        <end position="82"/>
    </location>
</feature>
<feature type="helix" evidence="12">
    <location>
        <begin position="83"/>
        <end position="85"/>
    </location>
</feature>
<feature type="helix" evidence="8">
    <location>
        <begin position="89"/>
        <end position="92"/>
    </location>
</feature>
<feature type="strand" evidence="8">
    <location>
        <begin position="93"/>
        <end position="98"/>
    </location>
</feature>
<feature type="helix" evidence="8">
    <location>
        <begin position="109"/>
        <end position="130"/>
    </location>
</feature>
<proteinExistence type="evidence at protein level"/>
<organism>
    <name type="scientific">Synechocystis sp. (strain ATCC 27184 / PCC 6803 / Kazusa)</name>
    <dbReference type="NCBI Taxonomy" id="1111708"/>
    <lineage>
        <taxon>Bacteria</taxon>
        <taxon>Bacillati</taxon>
        <taxon>Cyanobacteriota</taxon>
        <taxon>Cyanophyceae</taxon>
        <taxon>Synechococcales</taxon>
        <taxon>Merismopediaceae</taxon>
        <taxon>Synechocystis</taxon>
    </lineage>
</organism>
<name>ARSC_SYNY3</name>
<accession>P74313</accession>
<gene>
    <name type="primary">arsC</name>
    <name type="ordered locus">slr0946</name>
</gene>
<reference key="1">
    <citation type="journal article" date="1996" name="DNA Res.">
        <title>Sequence analysis of the genome of the unicellular cyanobacterium Synechocystis sp. strain PCC6803. II. Sequence determination of the entire genome and assignment of potential protein-coding regions.</title>
        <authorList>
            <person name="Kaneko T."/>
            <person name="Sato S."/>
            <person name="Kotani H."/>
            <person name="Tanaka A."/>
            <person name="Asamizu E."/>
            <person name="Nakamura Y."/>
            <person name="Miyajima N."/>
            <person name="Hirosawa M."/>
            <person name="Sugiura M."/>
            <person name="Sasamoto S."/>
            <person name="Kimura T."/>
            <person name="Hosouchi T."/>
            <person name="Matsuno A."/>
            <person name="Muraki A."/>
            <person name="Nakazaki N."/>
            <person name="Naruo K."/>
            <person name="Okumura S."/>
            <person name="Shimpo S."/>
            <person name="Takeuchi C."/>
            <person name="Wada T."/>
            <person name="Watanabe A."/>
            <person name="Yamada M."/>
            <person name="Yasuda M."/>
            <person name="Tabata S."/>
        </authorList>
    </citation>
    <scope>NUCLEOTIDE SEQUENCE [LARGE SCALE GENOMIC DNA]</scope>
    <source>
        <strain>ATCC 27184 / PCC 6803 / Kazusa</strain>
    </source>
</reference>
<reference key="2">
    <citation type="journal article" date="2003" name="J. Bacteriol.">
        <title>An arsenate reductase from Synechocystis sp. strain PCC 6803 exhibits a novel combination of catalytic characteristics.</title>
        <authorList>
            <person name="Li R."/>
            <person name="Haile J.D."/>
            <person name="Kennelly P.J."/>
        </authorList>
    </citation>
    <scope>FUNCTION</scope>
    <scope>SUBUNIT</scope>
    <scope>BIOPHYSICOCHEMICAL PROPERTIES</scope>
    <scope>DISULFIDE BOND</scope>
    <scope>MUTAGENESIS OF CYS-8; CYS-13; CYS-80 AND CYS-82</scope>
    <source>
        <strain>ATCC 27184 / PCC 6803 / N-1</strain>
    </source>
</reference>
<reference key="3">
    <citation type="journal article" date="2009" name="J. Bacteriol.">
        <title>The glutathione/glutaredoxin system is essential for arsenate reduction in Synechocystis sp. strain PCC 6803.</title>
        <authorList>
            <person name="Lopez-Maury L."/>
            <person name="Sanchez-Riego A.M."/>
            <person name="Reyes J.C."/>
            <person name="Florencio F.J."/>
        </authorList>
    </citation>
    <scope>FUNCTION</scope>
    <source>
        <strain>ATCC 27184 / PCC 6803 / N-1</strain>
    </source>
</reference>
<reference key="4">
    <citation type="journal article" date="2012" name="Biochim. Biophys. Acta">
        <title>Redox, mutagenic and structural studies of the glutaredoxin/arsenate reductase couple from the cyanobacterium Synechocystis sp. PCC 6803.</title>
        <authorList>
            <person name="Kim S.G."/>
            <person name="Chung J.S."/>
            <person name="Sutton R.B."/>
            <person name="Lee J.S."/>
            <person name="Lopez-Maury L."/>
            <person name="Lee S.Y."/>
            <person name="Florencio F.J."/>
            <person name="Lin T."/>
            <person name="Zabet-Moghaddam M."/>
            <person name="Wood M.J."/>
            <person name="Nayak K."/>
            <person name="Madem V."/>
            <person name="Tripathy J.N."/>
            <person name="Kim S.K."/>
            <person name="Knaff D.B."/>
        </authorList>
    </citation>
    <scope>FUNCTION</scope>
    <scope>MUTAGENESIS OF CYS-8; CYS-13; CYS-35; CYS-80 AND CYS-82</scope>
    <scope>REACTION MECHANISM</scope>
    <source>
        <strain>ATCC 27184 / PCC 6803 / N-1</strain>
    </source>
</reference>
<reference key="5">
    <citation type="journal article" date="2011" name="Biomol. NMR. Assign.">
        <title>1H, 13C and 15N resonance assignments of the arsenate reductase from Synechocystis sp. strain PCC 6803.</title>
        <authorList>
            <person name="Yu C."/>
            <person name="Xia B."/>
            <person name="Jin C."/>
        </authorList>
    </citation>
    <scope>STRUCTURE BY NMR</scope>
    <scope>DISULFIDE BOND</scope>
    <source>
        <strain>ATCC 27184 / PCC 6803 / N-1</strain>
    </source>
</reference>
<dbReference type="EC" id="1.20.4.1"/>
<dbReference type="EC" id="3.1.3.48"/>
<dbReference type="EMBL" id="BA000022">
    <property type="protein sequence ID" value="BAA18407.1"/>
    <property type="molecule type" value="Genomic_DNA"/>
</dbReference>
<dbReference type="PIR" id="S76148">
    <property type="entry name" value="S76148"/>
</dbReference>
<dbReference type="PDB" id="2L17">
    <property type="method" value="NMR"/>
    <property type="chains" value="A=1-131"/>
</dbReference>
<dbReference type="PDB" id="2L18">
    <property type="method" value="NMR"/>
    <property type="chains" value="A=1-131"/>
</dbReference>
<dbReference type="PDB" id="2L19">
    <property type="method" value="NMR"/>
    <property type="chains" value="A=1-131"/>
</dbReference>
<dbReference type="PDB" id="2MYN">
    <property type="method" value="NMR"/>
    <property type="chains" value="A=1-131"/>
</dbReference>
<dbReference type="PDB" id="2MYP">
    <property type="method" value="NMR"/>
    <property type="chains" value="A=1-131"/>
</dbReference>
<dbReference type="PDB" id="2MYT">
    <property type="method" value="NMR"/>
    <property type="chains" value="A=1-131"/>
</dbReference>
<dbReference type="PDB" id="2MYU">
    <property type="method" value="NMR"/>
    <property type="chains" value="A=1-131"/>
</dbReference>
<dbReference type="PDBsum" id="2L17"/>
<dbReference type="PDBsum" id="2L18"/>
<dbReference type="PDBsum" id="2L19"/>
<dbReference type="PDBsum" id="2MYN"/>
<dbReference type="PDBsum" id="2MYP"/>
<dbReference type="PDBsum" id="2MYT"/>
<dbReference type="PDBsum" id="2MYU"/>
<dbReference type="BMRB" id="P74313"/>
<dbReference type="SMR" id="P74313"/>
<dbReference type="FunCoup" id="P74313">
    <property type="interactions" value="157"/>
</dbReference>
<dbReference type="STRING" id="1148.gene:10499283"/>
<dbReference type="PaxDb" id="1148-1653494"/>
<dbReference type="EnsemblBacteria" id="BAA18407">
    <property type="protein sequence ID" value="BAA18407"/>
    <property type="gene ID" value="BAA18407"/>
</dbReference>
<dbReference type="KEGG" id="syn:slr0946"/>
<dbReference type="eggNOG" id="COG0394">
    <property type="taxonomic scope" value="Bacteria"/>
</dbReference>
<dbReference type="InParanoid" id="P74313"/>
<dbReference type="PhylomeDB" id="P74313"/>
<dbReference type="BRENDA" id="1.20.4.1">
    <property type="organism ID" value="382"/>
</dbReference>
<dbReference type="EvolutionaryTrace" id="P74313"/>
<dbReference type="Proteomes" id="UP000001425">
    <property type="component" value="Chromosome"/>
</dbReference>
<dbReference type="GO" id="GO:0008794">
    <property type="term" value="F:arsenate reductase (glutaredoxin) activity"/>
    <property type="evidence" value="ECO:0007669"/>
    <property type="project" value="UniProtKB-EC"/>
</dbReference>
<dbReference type="GO" id="GO:0004725">
    <property type="term" value="F:protein tyrosine phosphatase activity"/>
    <property type="evidence" value="ECO:0000318"/>
    <property type="project" value="GO_Central"/>
</dbReference>
<dbReference type="GO" id="GO:0046685">
    <property type="term" value="P:response to arsenic-containing substance"/>
    <property type="evidence" value="ECO:0007669"/>
    <property type="project" value="UniProtKB-KW"/>
</dbReference>
<dbReference type="CDD" id="cd16345">
    <property type="entry name" value="LMWP_ArsC"/>
    <property type="match status" value="1"/>
</dbReference>
<dbReference type="Gene3D" id="3.40.50.2300">
    <property type="match status" value="1"/>
</dbReference>
<dbReference type="InterPro" id="IPR014062">
    <property type="entry name" value="Arsenate_reductase_gluta"/>
</dbReference>
<dbReference type="InterPro" id="IPR023485">
    <property type="entry name" value="Ptyr_pPase"/>
</dbReference>
<dbReference type="InterPro" id="IPR036196">
    <property type="entry name" value="Ptyr_pPase_sf"/>
</dbReference>
<dbReference type="NCBIfam" id="TIGR02689">
    <property type="entry name" value="ars_reduc_gluta"/>
    <property type="match status" value="1"/>
</dbReference>
<dbReference type="PANTHER" id="PTHR43428">
    <property type="entry name" value="ARSENATE REDUCTASE"/>
    <property type="match status" value="1"/>
</dbReference>
<dbReference type="PANTHER" id="PTHR43428:SF1">
    <property type="entry name" value="ARSENATE REDUCTASE"/>
    <property type="match status" value="1"/>
</dbReference>
<dbReference type="Pfam" id="PF01451">
    <property type="entry name" value="LMWPc"/>
    <property type="match status" value="1"/>
</dbReference>
<dbReference type="SMART" id="SM00226">
    <property type="entry name" value="LMWPc"/>
    <property type="match status" value="1"/>
</dbReference>
<dbReference type="SUPFAM" id="SSF52788">
    <property type="entry name" value="Phosphotyrosine protein phosphatases I"/>
    <property type="match status" value="1"/>
</dbReference>
<comment type="function">
    <text evidence="2 3 5">Reduces arsenate [As(V)] to arsenite [As(III)] using glutathione and glutaredoxin as sources of reducing equivalents. GrxA is the most effective electron donor in vivo compared to other glutaredoxins. Constitutes the major arsenate reductase compared to ArsI1 and ArsI2. Also shows weak phosphatase activity toward p-nitrophenyl phosphate.</text>
</comment>
<comment type="catalytic activity">
    <reaction>
        <text>O-phospho-L-tyrosyl-[protein] + H2O = L-tyrosyl-[protein] + phosphate</text>
        <dbReference type="Rhea" id="RHEA:10684"/>
        <dbReference type="Rhea" id="RHEA-COMP:10136"/>
        <dbReference type="Rhea" id="RHEA-COMP:20101"/>
        <dbReference type="ChEBI" id="CHEBI:15377"/>
        <dbReference type="ChEBI" id="CHEBI:43474"/>
        <dbReference type="ChEBI" id="CHEBI:46858"/>
        <dbReference type="ChEBI" id="CHEBI:61978"/>
        <dbReference type="EC" id="3.1.3.48"/>
    </reaction>
</comment>
<comment type="catalytic activity">
    <reaction>
        <text>[glutaredoxin]-dithiol + arsenate + glutathione + H(+) = glutathionyl-S-S-[glutaredoxin] + arsenite + H2O</text>
        <dbReference type="Rhea" id="RHEA:22016"/>
        <dbReference type="Rhea" id="RHEA-COMP:10729"/>
        <dbReference type="Rhea" id="RHEA-COMP:17668"/>
        <dbReference type="ChEBI" id="CHEBI:15377"/>
        <dbReference type="ChEBI" id="CHEBI:15378"/>
        <dbReference type="ChEBI" id="CHEBI:29242"/>
        <dbReference type="ChEBI" id="CHEBI:29950"/>
        <dbReference type="ChEBI" id="CHEBI:48597"/>
        <dbReference type="ChEBI" id="CHEBI:57925"/>
        <dbReference type="ChEBI" id="CHEBI:146199"/>
        <dbReference type="EC" id="1.20.4.1"/>
    </reaction>
</comment>
<comment type="biophysicochemical properties">
    <kinetics>
        <KM evidence="2">77 mM for p-nitrophenyl phosphate</KM>
        <Vmax evidence="2">3.1 umol/min/mg enzyme with arsenate as substrate</Vmax>
        <Vmax evidence="2">0.08 umol/min/mg enzyme with p-nitrophenyl phosphate as substrate</Vmax>
    </kinetics>
</comment>
<comment type="subunit">
    <text evidence="2">Homodimer.</text>
</comment>
<comment type="miscellaneous">
    <text evidence="7">Cys-8 probably provides the initial functional group for covalent attachment of the electron-accepting substrate, arsenate, to ArsC.</text>
</comment>
<comment type="similarity">
    <text evidence="6">Belongs to the low molecular weight phosphotyrosine protein phosphatase family.</text>
</comment>
<protein>
    <recommendedName>
        <fullName>Glutaredoxin arsenate reductase</fullName>
        <ecNumber>1.20.4.1</ecNumber>
    </recommendedName>
    <alternativeName>
        <fullName>Low molecular weight protein-tyrosine-phosphatase</fullName>
        <ecNumber>3.1.3.48</ecNumber>
    </alternativeName>
    <alternativeName>
        <fullName>Protein ArsC</fullName>
        <shortName>SynArsC</shortName>
        <shortName>rSynArsC</shortName>
    </alternativeName>
</protein>
<keyword id="KW-0002">3D-structure</keyword>
<keyword id="KW-0059">Arsenical resistance</keyword>
<keyword id="KW-1015">Disulfide bond</keyword>
<keyword id="KW-0378">Hydrolase</keyword>
<keyword id="KW-0560">Oxidoreductase</keyword>
<keyword id="KW-0676">Redox-active center</keyword>
<keyword id="KW-1185">Reference proteome</keyword>
<evidence type="ECO:0000250" key="1"/>
<evidence type="ECO:0000269" key="2">
    <source>
    </source>
</evidence>
<evidence type="ECO:0000269" key="3">
    <source>
    </source>
</evidence>
<evidence type="ECO:0000269" key="4">
    <source>
    </source>
</evidence>
<evidence type="ECO:0000269" key="5">
    <source>
    </source>
</evidence>
<evidence type="ECO:0000305" key="6"/>
<evidence type="ECO:0000305" key="7">
    <source>
    </source>
</evidence>
<evidence type="ECO:0007829" key="8">
    <source>
        <dbReference type="PDB" id="2L17"/>
    </source>
</evidence>
<evidence type="ECO:0007829" key="9">
    <source>
        <dbReference type="PDB" id="2L19"/>
    </source>
</evidence>
<evidence type="ECO:0007829" key="10">
    <source>
        <dbReference type="PDB" id="2MYN"/>
    </source>
</evidence>
<evidence type="ECO:0007829" key="11">
    <source>
        <dbReference type="PDB" id="2MYT"/>
    </source>
</evidence>
<evidence type="ECO:0007829" key="12">
    <source>
        <dbReference type="PDB" id="2MYU"/>
    </source>
</evidence>
<sequence>MKKVMFVCKRNSCRSQMAEGFAKTLGAGKIAVTSCGLESSRVHPTAIAMMEEVGIDISGQTSDPIENFNADDYDVVISLCGCGVNLPPEWVTQEIFEDWQLEDPDGQSLEVFRTVRGQVKERVENLIAKIS</sequence>